<accession>Q2UQV7</accession>
<feature type="signal peptide" evidence="2">
    <location>
        <begin position="1"/>
        <end position="14"/>
    </location>
</feature>
<feature type="chain" id="PRO_0000394917" description="Probable alpha/beta-glucosidase agdC">
    <location>
        <begin position="15"/>
        <end position="877"/>
    </location>
</feature>
<feature type="region of interest" description="Disordered" evidence="4">
    <location>
        <begin position="432"/>
        <end position="476"/>
    </location>
</feature>
<feature type="compositionally biased region" description="Pro residues" evidence="4">
    <location>
        <begin position="447"/>
        <end position="463"/>
    </location>
</feature>
<feature type="active site" description="Nucleophile" evidence="3">
    <location>
        <position position="422"/>
    </location>
</feature>
<feature type="active site" evidence="1">
    <location>
        <position position="425"/>
    </location>
</feature>
<feature type="active site" description="Proton donor" evidence="1">
    <location>
        <position position="573"/>
    </location>
</feature>
<feature type="glycosylation site" description="N-linked (GlcNAc...) asparagine" evidence="2">
    <location>
        <position position="171"/>
    </location>
</feature>
<feature type="glycosylation site" description="N-linked (GlcNAc...) asparagine" evidence="2">
    <location>
        <position position="293"/>
    </location>
</feature>
<feature type="glycosylation site" description="N-linked (GlcNAc...) asparagine" evidence="2">
    <location>
        <position position="373"/>
    </location>
</feature>
<feature type="glycosylation site" description="N-linked (GlcNAc...) asparagine" evidence="2">
    <location>
        <position position="508"/>
    </location>
</feature>
<feature type="glycosylation site" description="N-linked (GlcNAc...) asparagine" evidence="2">
    <location>
        <position position="574"/>
    </location>
</feature>
<feature type="glycosylation site" description="N-linked (GlcNAc...) asparagine" evidence="2">
    <location>
        <position position="610"/>
    </location>
</feature>
<feature type="glycosylation site" description="N-linked (GlcNAc...) asparagine" evidence="2">
    <location>
        <position position="744"/>
    </location>
</feature>
<protein>
    <recommendedName>
        <fullName>Probable alpha/beta-glucosidase agdC</fullName>
        <ecNumber>3.2.1.20</ecNumber>
        <ecNumber>3.2.1.21</ecNumber>
    </recommendedName>
</protein>
<organism>
    <name type="scientific">Aspergillus oryzae (strain ATCC 42149 / RIB 40)</name>
    <name type="common">Yellow koji mold</name>
    <dbReference type="NCBI Taxonomy" id="510516"/>
    <lineage>
        <taxon>Eukaryota</taxon>
        <taxon>Fungi</taxon>
        <taxon>Dikarya</taxon>
        <taxon>Ascomycota</taxon>
        <taxon>Pezizomycotina</taxon>
        <taxon>Eurotiomycetes</taxon>
        <taxon>Eurotiomycetidae</taxon>
        <taxon>Eurotiales</taxon>
        <taxon>Aspergillaceae</taxon>
        <taxon>Aspergillus</taxon>
        <taxon>Aspergillus subgen. Circumdati</taxon>
    </lineage>
</organism>
<proteinExistence type="inferred from homology"/>
<name>AGDC_ASPOR</name>
<dbReference type="EC" id="3.2.1.20"/>
<dbReference type="EC" id="3.2.1.21"/>
<dbReference type="EMBL" id="BA000049">
    <property type="protein sequence ID" value="BAE56058.1"/>
    <property type="molecule type" value="Genomic_DNA"/>
</dbReference>
<dbReference type="RefSeq" id="XP_001818060.1">
    <property type="nucleotide sequence ID" value="XM_001818008.2"/>
</dbReference>
<dbReference type="SMR" id="Q2UQV7"/>
<dbReference type="STRING" id="510516.Q2UQV7"/>
<dbReference type="CAZy" id="GH31">
    <property type="family name" value="Glycoside Hydrolase Family 31"/>
</dbReference>
<dbReference type="GlyCosmos" id="Q2UQV7">
    <property type="glycosylation" value="7 sites, No reported glycans"/>
</dbReference>
<dbReference type="EnsemblFungi" id="BAE56058">
    <property type="protein sequence ID" value="BAE56058"/>
    <property type="gene ID" value="AO090005001084"/>
</dbReference>
<dbReference type="GeneID" id="5990005"/>
<dbReference type="KEGG" id="aor:AO090005001084"/>
<dbReference type="VEuPathDB" id="FungiDB:AO090005001084"/>
<dbReference type="HOGENOM" id="CLU_000631_11_0_1"/>
<dbReference type="OMA" id="YKGAVWP"/>
<dbReference type="OrthoDB" id="40153at5052"/>
<dbReference type="Proteomes" id="UP000006564">
    <property type="component" value="Chromosome 1"/>
</dbReference>
<dbReference type="GO" id="GO:0005576">
    <property type="term" value="C:extracellular region"/>
    <property type="evidence" value="ECO:0007669"/>
    <property type="project" value="UniProtKB-SubCell"/>
</dbReference>
<dbReference type="GO" id="GO:0004558">
    <property type="term" value="F:alpha-1,4-glucosidase activity"/>
    <property type="evidence" value="ECO:0007669"/>
    <property type="project" value="UniProtKB-EC"/>
</dbReference>
<dbReference type="GO" id="GO:0008422">
    <property type="term" value="F:beta-glucosidase activity"/>
    <property type="evidence" value="ECO:0007669"/>
    <property type="project" value="UniProtKB-EC"/>
</dbReference>
<dbReference type="GO" id="GO:0030246">
    <property type="term" value="F:carbohydrate binding"/>
    <property type="evidence" value="ECO:0007669"/>
    <property type="project" value="InterPro"/>
</dbReference>
<dbReference type="GO" id="GO:0071555">
    <property type="term" value="P:cell wall organization"/>
    <property type="evidence" value="ECO:0007669"/>
    <property type="project" value="UniProtKB-KW"/>
</dbReference>
<dbReference type="GO" id="GO:0000272">
    <property type="term" value="P:polysaccharide catabolic process"/>
    <property type="evidence" value="ECO:0007669"/>
    <property type="project" value="UniProtKB-KW"/>
</dbReference>
<dbReference type="CDD" id="cd06602">
    <property type="entry name" value="GH31_MGAM_SI_GAA"/>
    <property type="match status" value="1"/>
</dbReference>
<dbReference type="CDD" id="cd14752">
    <property type="entry name" value="GH31_N"/>
    <property type="match status" value="1"/>
</dbReference>
<dbReference type="Gene3D" id="3.20.20.80">
    <property type="entry name" value="Glycosidases"/>
    <property type="match status" value="1"/>
</dbReference>
<dbReference type="Gene3D" id="2.60.40.1760">
    <property type="entry name" value="glycosyl hydrolase (family 31)"/>
    <property type="match status" value="1"/>
</dbReference>
<dbReference type="Gene3D" id="2.60.40.1180">
    <property type="entry name" value="Golgi alpha-mannosidase II"/>
    <property type="match status" value="2"/>
</dbReference>
<dbReference type="InterPro" id="IPR011013">
    <property type="entry name" value="Gal_mutarotase_sf_dom"/>
</dbReference>
<dbReference type="InterPro" id="IPR030458">
    <property type="entry name" value="Glyco_hydro_31_AS"/>
</dbReference>
<dbReference type="InterPro" id="IPR048395">
    <property type="entry name" value="Glyco_hydro_31_C"/>
</dbReference>
<dbReference type="InterPro" id="IPR025887">
    <property type="entry name" value="Glyco_hydro_31_N_dom"/>
</dbReference>
<dbReference type="InterPro" id="IPR000322">
    <property type="entry name" value="Glyco_hydro_31_TIM"/>
</dbReference>
<dbReference type="InterPro" id="IPR013780">
    <property type="entry name" value="Glyco_hydro_b"/>
</dbReference>
<dbReference type="InterPro" id="IPR017853">
    <property type="entry name" value="Glycoside_hydrolase_SF"/>
</dbReference>
<dbReference type="PANTHER" id="PTHR22762">
    <property type="entry name" value="ALPHA-GLUCOSIDASE"/>
    <property type="match status" value="1"/>
</dbReference>
<dbReference type="PANTHER" id="PTHR22762:SF67">
    <property type="entry name" value="ALPHA_BETA-GLUCOSIDASE AGDC-RELATED"/>
    <property type="match status" value="1"/>
</dbReference>
<dbReference type="Pfam" id="PF13802">
    <property type="entry name" value="Gal_mutarotas_2"/>
    <property type="match status" value="1"/>
</dbReference>
<dbReference type="Pfam" id="PF01055">
    <property type="entry name" value="Glyco_hydro_31_2nd"/>
    <property type="match status" value="1"/>
</dbReference>
<dbReference type="Pfam" id="PF21365">
    <property type="entry name" value="Glyco_hydro_31_3rd"/>
    <property type="match status" value="1"/>
</dbReference>
<dbReference type="SUPFAM" id="SSF51445">
    <property type="entry name" value="(Trans)glycosidases"/>
    <property type="match status" value="1"/>
</dbReference>
<dbReference type="SUPFAM" id="SSF74650">
    <property type="entry name" value="Galactose mutarotase-like"/>
    <property type="match status" value="1"/>
</dbReference>
<dbReference type="SUPFAM" id="SSF51011">
    <property type="entry name" value="Glycosyl hydrolase domain"/>
    <property type="match status" value="1"/>
</dbReference>
<dbReference type="PROSITE" id="PS00129">
    <property type="entry name" value="GLYCOSYL_HYDROL_F31_1"/>
    <property type="match status" value="1"/>
</dbReference>
<reference key="1">
    <citation type="journal article" date="2005" name="Nature">
        <title>Genome sequencing and analysis of Aspergillus oryzae.</title>
        <authorList>
            <person name="Machida M."/>
            <person name="Asai K."/>
            <person name="Sano M."/>
            <person name="Tanaka T."/>
            <person name="Kumagai T."/>
            <person name="Terai G."/>
            <person name="Kusumoto K."/>
            <person name="Arima T."/>
            <person name="Akita O."/>
            <person name="Kashiwagi Y."/>
            <person name="Abe K."/>
            <person name="Gomi K."/>
            <person name="Horiuchi H."/>
            <person name="Kitamoto K."/>
            <person name="Kobayashi T."/>
            <person name="Takeuchi M."/>
            <person name="Denning D.W."/>
            <person name="Galagan J.E."/>
            <person name="Nierman W.C."/>
            <person name="Yu J."/>
            <person name="Archer D.B."/>
            <person name="Bennett J.W."/>
            <person name="Bhatnagar D."/>
            <person name="Cleveland T.E."/>
            <person name="Fedorova N.D."/>
            <person name="Gotoh O."/>
            <person name="Horikawa H."/>
            <person name="Hosoyama A."/>
            <person name="Ichinomiya M."/>
            <person name="Igarashi R."/>
            <person name="Iwashita K."/>
            <person name="Juvvadi P.R."/>
            <person name="Kato M."/>
            <person name="Kato Y."/>
            <person name="Kin T."/>
            <person name="Kokubun A."/>
            <person name="Maeda H."/>
            <person name="Maeyama N."/>
            <person name="Maruyama J."/>
            <person name="Nagasaki H."/>
            <person name="Nakajima T."/>
            <person name="Oda K."/>
            <person name="Okada K."/>
            <person name="Paulsen I."/>
            <person name="Sakamoto K."/>
            <person name="Sawano T."/>
            <person name="Takahashi M."/>
            <person name="Takase K."/>
            <person name="Terabayashi Y."/>
            <person name="Wortman J.R."/>
            <person name="Yamada O."/>
            <person name="Yamagata Y."/>
            <person name="Anazawa H."/>
            <person name="Hata Y."/>
            <person name="Koide Y."/>
            <person name="Komori T."/>
            <person name="Koyama Y."/>
            <person name="Minetoki T."/>
            <person name="Suharnan S."/>
            <person name="Tanaka A."/>
            <person name="Isono K."/>
            <person name="Kuhara S."/>
            <person name="Ogasawara N."/>
            <person name="Kikuchi H."/>
        </authorList>
    </citation>
    <scope>NUCLEOTIDE SEQUENCE [LARGE SCALE GENOMIC DNA]</scope>
    <source>
        <strain>ATCC 42149 / RIB 40</strain>
    </source>
</reference>
<comment type="function">
    <text evidence="1">Glucosidase involved in the degradation of cellulosic biomass. Has both alpha- and beta-glucosidase activity (By similarity).</text>
</comment>
<comment type="catalytic activity">
    <reaction>
        <text>Hydrolysis of terminal, non-reducing (1-&gt;4)-linked alpha-D-glucose residues with release of alpha-D-glucose.</text>
        <dbReference type="EC" id="3.2.1.20"/>
    </reaction>
</comment>
<comment type="catalytic activity">
    <reaction>
        <text>Hydrolysis of terminal, non-reducing beta-D-glucosyl residues with release of beta-D-glucose.</text>
        <dbReference type="EC" id="3.2.1.21"/>
    </reaction>
</comment>
<comment type="subcellular location">
    <subcellularLocation>
        <location evidence="1">Secreted</location>
    </subcellularLocation>
</comment>
<comment type="similarity">
    <text evidence="5">Belongs to the glycosyl hydrolase 31 family.</text>
</comment>
<evidence type="ECO:0000250" key="1"/>
<evidence type="ECO:0000255" key="2"/>
<evidence type="ECO:0000255" key="3">
    <source>
        <dbReference type="PROSITE-ProRule" id="PRU10066"/>
    </source>
</evidence>
<evidence type="ECO:0000256" key="4">
    <source>
        <dbReference type="SAM" id="MobiDB-lite"/>
    </source>
</evidence>
<evidence type="ECO:0000305" key="5"/>
<gene>
    <name type="primary">agdC</name>
    <name type="ORF">AO090005001084</name>
</gene>
<keyword id="KW-0119">Carbohydrate metabolism</keyword>
<keyword id="KW-0961">Cell wall biogenesis/degradation</keyword>
<keyword id="KW-0325">Glycoprotein</keyword>
<keyword id="KW-0326">Glycosidase</keyword>
<keyword id="KW-0378">Hydrolase</keyword>
<keyword id="KW-0624">Polysaccharide degradation</keyword>
<keyword id="KW-1185">Reference proteome</keyword>
<keyword id="KW-0964">Secreted</keyword>
<keyword id="KW-0732">Signal</keyword>
<sequence length="877" mass="98791">MLGSLLLLAPLAGAAVIGSRADTQQCPGYKASNVQENDRSLTADLTLAGKPCNTYGTDLHNLKLLVEYQTDERLHVKIYDAEERVYQVPEKVTPRVDSGDGSSKDSALKFEYEEEPFSFTVKRDDEVLFDSSAENLIFQSQYLKLRTWLPENPYLYGLGEHTDPLRLSTTNYTRTFWNRDAYGTSANSNLYGTHPVYYDHRGESGTHGVFLLNSNGMDVFIDKTADGKQYLEYNALGGIFDFYFFTGSNPKEASIEYSKIVGLPAMQSYWTFGLHQCRYGYRDVYQVAEVVYNYTKAGIPLETMWTDIDYMDRRRVFSLDPDRFPLEKMRELVGYLHDHDQHYIVMVDPAVSVSDNGAFNRGLEQDVFLKTQNGSLYKGAVWPGVTAYPDWFHPDIQDYWNSEFSTFFNAETGVDIDGLWIDMNEASNFCPDPCTDPERYSSENNLPPAPPPVRSSSPRPLPGFPADFQPSSASRSQKRIVKAKVGLEGRDLLNPPYKIRNEAGSLSNKTINTGIVHAGEGYAEYDTHNLYGTMMSSSSREAMQYRRPEVRPLVITRSTYAGAGRDVGHWLGDNFSKWEHYRISIAEGLAFASMFQVPMVGADVCGFAGNTTEELCARWASLGAFFTFYRNHNEIGNIGQEFYVWPTVAESARKAIDIRYRLLDYIYTSFYKQSQTGEPFLQPVFYLYPEDENTFSIDLQFFYGDAILVSPVPDKGLTSVDAYFPDDIFYDWYTGTPVRGHGANITLSNIDITHIPLHIRGGSIIPIRSSSAMTTTELREKSFQLIIAPGLDGTASGSLYLDDGDSLEQKATLEVEFEYRKGVLHIDGKFELHASLVESVTLLGQGKGGSRARREDGTKKTIQTNLELSKPTEIKLE</sequence>